<evidence type="ECO:0000250" key="1">
    <source>
        <dbReference type="UniProtKB" id="Q811B1"/>
    </source>
</evidence>
<evidence type="ECO:0000255" key="2"/>
<evidence type="ECO:0000256" key="3">
    <source>
        <dbReference type="SAM" id="MobiDB-lite"/>
    </source>
</evidence>
<evidence type="ECO:0000269" key="4">
    <source>
    </source>
</evidence>
<evidence type="ECO:0000269" key="5">
    <source>
    </source>
</evidence>
<evidence type="ECO:0000269" key="6">
    <source>
    </source>
</evidence>
<evidence type="ECO:0000269" key="7">
    <source>
    </source>
</evidence>
<evidence type="ECO:0000269" key="8">
    <source>
    </source>
</evidence>
<evidence type="ECO:0000269" key="9">
    <source>
    </source>
</evidence>
<evidence type="ECO:0000269" key="10">
    <source>
    </source>
</evidence>
<evidence type="ECO:0000269" key="11">
    <source>
    </source>
</evidence>
<evidence type="ECO:0000269" key="12">
    <source>
    </source>
</evidence>
<evidence type="ECO:0000269" key="13">
    <source>
    </source>
</evidence>
<evidence type="ECO:0000269" key="14">
    <source>
    </source>
</evidence>
<evidence type="ECO:0000305" key="15"/>
<evidence type="ECO:0000305" key="16">
    <source>
    </source>
</evidence>
<evidence type="ECO:0007744" key="17">
    <source>
        <dbReference type="PDB" id="6EJ7"/>
    </source>
</evidence>
<evidence type="ECO:0007744" key="18">
    <source>
        <dbReference type="PDB" id="6EJ8"/>
    </source>
</evidence>
<evidence type="ECO:0007744" key="19">
    <source>
        <dbReference type="PDB" id="6FOA"/>
    </source>
</evidence>
<evidence type="ECO:0007829" key="20">
    <source>
        <dbReference type="PDB" id="6FOA"/>
    </source>
</evidence>
<accession>Q86Y38</accession>
<accession>Q9H1B6</accession>
<organism>
    <name type="scientific">Homo sapiens</name>
    <name type="common">Human</name>
    <dbReference type="NCBI Taxonomy" id="9606"/>
    <lineage>
        <taxon>Eukaryota</taxon>
        <taxon>Metazoa</taxon>
        <taxon>Chordata</taxon>
        <taxon>Craniata</taxon>
        <taxon>Vertebrata</taxon>
        <taxon>Euteleostomi</taxon>
        <taxon>Mammalia</taxon>
        <taxon>Eutheria</taxon>
        <taxon>Euarchontoglires</taxon>
        <taxon>Primates</taxon>
        <taxon>Haplorrhini</taxon>
        <taxon>Catarrhini</taxon>
        <taxon>Hominidae</taxon>
        <taxon>Homo</taxon>
    </lineage>
</organism>
<gene>
    <name type="primary">XYLT1</name>
    <name type="synonym">XT1</name>
</gene>
<comment type="function">
    <text evidence="1 8 10 11 12">Catalyzes the first step in the biosynthesis of chondroitin sulfate and dermatan sulfate proteoglycans, such as DCN. Transfers D-xylose from UDP-D-xylose to specific serine residues of the core protein (PubMed:15461586, PubMed:17189265, PubMed:23982343, PubMed:24581741). Required for normal embryonic and postnatal skeleton development, especially of the long bones (PubMed:23982343, PubMed:24581741). Required for normal maturation of chondrocytes during bone development, and normal onset of ossification (By similarity).</text>
</comment>
<comment type="catalytic activity">
    <reaction evidence="4 5 7 8 11 14">
        <text>UDP-alpha-D-xylose + L-seryl-[protein] = 3-O-(beta-D-xylosyl)-L-seryl-[protein] + UDP + H(+)</text>
        <dbReference type="Rhea" id="RHEA:50192"/>
        <dbReference type="Rhea" id="RHEA-COMP:9863"/>
        <dbReference type="Rhea" id="RHEA-COMP:12567"/>
        <dbReference type="ChEBI" id="CHEBI:15378"/>
        <dbReference type="ChEBI" id="CHEBI:29999"/>
        <dbReference type="ChEBI" id="CHEBI:57632"/>
        <dbReference type="ChEBI" id="CHEBI:58223"/>
        <dbReference type="ChEBI" id="CHEBI:132085"/>
        <dbReference type="EC" id="2.4.2.26"/>
    </reaction>
</comment>
<comment type="cofactor">
    <cofactor evidence="7 8">
        <name>a divalent metal cation</name>
        <dbReference type="ChEBI" id="CHEBI:60240"/>
    </cofactor>
</comment>
<comment type="biophysicochemical properties">
    <kinetics>
        <KM evidence="7 8">0.9 uM for recombinant bikunin</KM>
        <Vmax evidence="7 8">764.0 pmol/h/mg enzyme with recombinant bikunin as substrate</Vmax>
    </kinetics>
</comment>
<comment type="pathway">
    <text evidence="10 11">Glycan metabolism; chondroitin sulfate biosynthesis.</text>
</comment>
<comment type="pathway">
    <text evidence="10">Glycan metabolism; heparan sulfate biosynthesis.</text>
</comment>
<comment type="subunit">
    <text evidence="8">Monomer.</text>
</comment>
<comment type="subcellular location">
    <subcellularLocation>
        <location evidence="11 13">Golgi apparatus membrane</location>
        <topology evidence="15">Single-pass type II membrane protein</topology>
    </subcellularLocation>
    <subcellularLocation>
        <location evidence="4 9">Secreted</location>
    </subcellularLocation>
    <text evidence="13">Detected predominantly in the Golgi apparatus.</text>
</comment>
<comment type="tissue specificity">
    <text evidence="5">Widely expressed. Expressed at higher level in placenta, kidney and pancreas. Weakly expressed in skeletal muscle.</text>
</comment>
<comment type="PTM">
    <text evidence="16">Contains 7 disulfide bonds.</text>
</comment>
<comment type="PTM">
    <text evidence="4">N-glycosylated.</text>
</comment>
<comment type="disease" evidence="11 12 13">
    <disease id="DI-04114">
        <name>Desbuquois dysplasia 2</name>
        <acronym>DBQD2</acronym>
        <description>A chondrodysplasia characterized by severe prenatal and postnatal growth retardation (less than -5 SD), joint laxity, short extremities, progressive scoliosis, round face, midface hypoplasia, prominent bulging eyes. The main radiologic features are short long bones with metaphyseal splay, a 'Swedish key' appearance of the proximal femur (exaggerated trochanter), and advance carpal and tarsal bone age. Two forms of Desbuquois dysplasia are distinguished on the basis of the presence or absence of characteristic hand anomalies: an extra ossification center distal to the second metacarpal, delta phalanx, bifid distal thumb phalanx, and phalangeal dislocations.</description>
        <dbReference type="MIM" id="615777"/>
    </disease>
    <text>The disease is caused by variants affecting the gene represented in this entry.</text>
</comment>
<comment type="disease" evidence="9">
    <disease id="DI-00959">
        <name>Pseudoxanthoma elasticum</name>
        <acronym>PXE</acronym>
        <description>A multisystem disorder characterized by accumulation of mineralized and fragmented elastic fibers in the skin, vascular walls, and Burch membrane in the eye. Clinically, patients exhibit characteristic lesions of the posterior segment of the eye including peau d'orange, angioid streaks, and choroidal neovascularizations, of the skin including soft, ivory colored papules in a reticular pattern that predominantly affect the neck and large flexor surfaces, and of the cardiovascular system with peripheral and coronary arterial occlusive disease as well as gastrointestinal bleedings.</description>
        <dbReference type="MIM" id="264800"/>
    </disease>
    <text>The gene represented in this entry acts as a disease modifier.</text>
</comment>
<comment type="miscellaneous">
    <text evidence="6">Activity is strongly reduced in seminal plasma of infertile men.</text>
</comment>
<comment type="similarity">
    <text evidence="15">Belongs to the glycosyltransferase 14 family. XylT subfamily.</text>
</comment>
<feature type="chain" id="PRO_0000191400" description="Xylosyltransferase 1">
    <location>
        <begin position="1"/>
        <end position="959"/>
    </location>
</feature>
<feature type="topological domain" description="Cytoplasmic" evidence="2">
    <location>
        <begin position="1"/>
        <end position="17"/>
    </location>
</feature>
<feature type="transmembrane region" description="Helical; Signal-anchor for type II membrane protein" evidence="2">
    <location>
        <begin position="18"/>
        <end position="38"/>
    </location>
</feature>
<feature type="topological domain" description="Lumenal" evidence="2">
    <location>
        <begin position="39"/>
        <end position="959"/>
    </location>
</feature>
<feature type="region of interest" description="Disordered" evidence="3">
    <location>
        <begin position="42"/>
        <end position="259"/>
    </location>
</feature>
<feature type="region of interest" description="Disordered" evidence="3">
    <location>
        <begin position="940"/>
        <end position="959"/>
    </location>
</feature>
<feature type="compositionally biased region" description="Gly residues" evidence="3">
    <location>
        <begin position="78"/>
        <end position="104"/>
    </location>
</feature>
<feature type="compositionally biased region" description="Basic and acidic residues" evidence="3">
    <location>
        <begin position="145"/>
        <end position="161"/>
    </location>
</feature>
<feature type="compositionally biased region" description="Polar residues" evidence="3">
    <location>
        <begin position="163"/>
        <end position="172"/>
    </location>
</feature>
<feature type="compositionally biased region" description="Basic and acidic residues" evidence="3">
    <location>
        <begin position="177"/>
        <end position="204"/>
    </location>
</feature>
<feature type="compositionally biased region" description="Basic and acidic residues" evidence="3">
    <location>
        <begin position="249"/>
        <end position="259"/>
    </location>
</feature>
<feature type="binding site" evidence="14 17">
    <location>
        <position position="333"/>
    </location>
    <ligand>
        <name>UDP-alpha-D-xylose</name>
        <dbReference type="ChEBI" id="CHEBI:57632"/>
    </ligand>
</feature>
<feature type="binding site" evidence="14 17">
    <location>
        <position position="361"/>
    </location>
    <ligand>
        <name>UDP-alpha-D-xylose</name>
        <dbReference type="ChEBI" id="CHEBI:57632"/>
    </ligand>
</feature>
<feature type="binding site" evidence="14 17">
    <location>
        <begin position="390"/>
        <end position="392"/>
    </location>
    <ligand>
        <name>UDP-alpha-D-xylose</name>
        <dbReference type="ChEBI" id="CHEBI:57632"/>
    </ligand>
</feature>
<feature type="binding site" evidence="14 17">
    <location>
        <begin position="494"/>
        <end position="495"/>
    </location>
    <ligand>
        <name>UDP-alpha-D-xylose</name>
        <dbReference type="ChEBI" id="CHEBI:57632"/>
    </ligand>
</feature>
<feature type="binding site" evidence="14 17">
    <location>
        <position position="575"/>
    </location>
    <ligand>
        <name>UDP-alpha-D-xylose</name>
        <dbReference type="ChEBI" id="CHEBI:57632"/>
    </ligand>
</feature>
<feature type="binding site" evidence="14 17">
    <location>
        <begin position="598"/>
        <end position="599"/>
    </location>
    <ligand>
        <name>UDP-alpha-D-xylose</name>
        <dbReference type="ChEBI" id="CHEBI:57632"/>
    </ligand>
</feature>
<feature type="glycosylation site" description="N-linked (GlcNAc...) asparagine" evidence="2">
    <location>
        <position position="226"/>
    </location>
</feature>
<feature type="glycosylation site" description="N-linked (GlcNAc...) asparagine" evidence="2">
    <location>
        <position position="421"/>
    </location>
</feature>
<feature type="glycosylation site" description="N-linked (GlcNAc...) asparagine" evidence="14 17 18 19">
    <location>
        <position position="777"/>
    </location>
</feature>
<feature type="disulfide bond" evidence="14 17 19">
    <location>
        <begin position="257"/>
        <end position="285"/>
    </location>
</feature>
<feature type="disulfide bond" evidence="14 17 19">
    <location>
        <begin position="301"/>
        <end position="542"/>
    </location>
</feature>
<feature type="disulfide bond" evidence="14 17 19">
    <location>
        <begin position="561"/>
        <end position="574"/>
    </location>
</feature>
<feature type="disulfide bond" evidence="14 17 19">
    <location>
        <begin position="563"/>
        <end position="572"/>
    </location>
</feature>
<feature type="disulfide bond" evidence="14 17 19">
    <location>
        <begin position="675"/>
        <end position="927"/>
    </location>
</feature>
<feature type="disulfide bond" evidence="14 17 19">
    <location>
        <begin position="920"/>
        <end position="933"/>
    </location>
</feature>
<feature type="sequence variant" id="VAR_071271" description="In PXE; acts as a modifier of disease severity; results in higher serum xylosyltransferase activity; dbSNP:rs61758388." evidence="9">
    <original>A</original>
    <variation>S</variation>
    <location>
        <position position="115"/>
    </location>
</feature>
<feature type="sequence variant" id="VAR_049324" description="In dbSNP:rs28709752.">
    <original>P</original>
    <variation>R</variation>
    <location>
        <position position="325"/>
    </location>
</feature>
<feature type="sequence variant" id="VAR_071272" description="In dbSNP:rs201009902." evidence="9">
    <original>R</original>
    <variation>W</variation>
    <location>
        <position position="406"/>
    </location>
</feature>
<feature type="sequence variant" id="VAR_071273" description="In DBQD2; causes retention in the endoplasmic reticulum; impairs dermatan sulfate proteoglycan synthesis; dbSNP:rs587777366." evidence="11 13">
    <original>R</original>
    <variation>W</variation>
    <location>
        <position position="481"/>
    </location>
</feature>
<feature type="sequence variant" id="VAR_071274" description="In DBQD2; causes retention in the endoplasmic reticulum; dbSNP:rs587777367." evidence="12 13">
    <original>R</original>
    <variation>C</variation>
    <location>
        <position position="598"/>
    </location>
</feature>
<feature type="sequence variant" id="VAR_071275" description="In dbSNP:rs79030430." evidence="9">
    <original>T</original>
    <variation>M</variation>
    <location>
        <position position="665"/>
    </location>
</feature>
<feature type="sequence variant" id="VAR_049325" description="In dbSNP:rs12325439.">
    <original>P</original>
    <variation>A</variation>
    <location>
        <position position="766"/>
    </location>
</feature>
<feature type="sequence variant" id="VAR_049326" description="In dbSNP:rs7200466.">
    <original>V</original>
    <variation>I</variation>
    <location>
        <position position="839"/>
    </location>
</feature>
<feature type="sequence variant" id="VAR_049327" description="In dbSNP:rs35309694.">
    <original>R</original>
    <variation>Q</variation>
    <location>
        <position position="892"/>
    </location>
</feature>
<feature type="mutagenesis site" description="No effect." evidence="8">
    <original>C</original>
    <variation>A</variation>
    <location>
        <position position="257"/>
    </location>
</feature>
<feature type="mutagenesis site" description="Strongly reduced enzyme activity." evidence="8">
    <original>C</original>
    <variation>A</variation>
    <location>
        <position position="276"/>
    </location>
</feature>
<feature type="mutagenesis site" description="No effect." evidence="8">
    <original>C</original>
    <variation>A</variation>
    <location>
        <position position="285"/>
    </location>
</feature>
<feature type="mutagenesis site" description="No effect." evidence="8">
    <original>C</original>
    <variation>A</variation>
    <location>
        <position position="301"/>
    </location>
</feature>
<feature type="mutagenesis site" description="No effect." evidence="7">
    <original>D</original>
    <variation>G</variation>
    <location>
        <position position="314"/>
    </location>
</feature>
<feature type="mutagenesis site" description="No effect." evidence="7">
    <original>D</original>
    <variation>G</variation>
    <location>
        <position position="316"/>
    </location>
</feature>
<feature type="mutagenesis site" description="No effect on enzyme activity." evidence="14">
    <original>Q</original>
    <variation>A</variation>
    <variation>W</variation>
    <location>
        <position position="462"/>
    </location>
</feature>
<feature type="mutagenesis site" description="Decreased enzyme activity." evidence="14">
    <original>Q</original>
    <variation>R</variation>
    <location>
        <position position="462"/>
    </location>
</feature>
<feature type="mutagenesis site" description="Strongly reduced enzyme activity." evidence="8">
    <original>C</original>
    <variation>A</variation>
    <location>
        <position position="471"/>
    </location>
</feature>
<feature type="mutagenesis site" description="Decreased enzyme activity." evidence="14">
    <original>D</original>
    <variation>A</variation>
    <location>
        <position position="494"/>
    </location>
</feature>
<feature type="mutagenesis site" description="Loss of enzyme activity." evidence="14">
    <original>D</original>
    <variation>N</variation>
    <location>
        <position position="494"/>
    </location>
</feature>
<feature type="mutagenesis site" description="Loss of enzyme activity." evidence="14">
    <original>E</original>
    <variation>A</variation>
    <location>
        <position position="529"/>
    </location>
</feature>
<feature type="mutagenesis site" description="No effect." evidence="8">
    <original>C</original>
    <variation>A</variation>
    <location>
        <position position="542"/>
    </location>
</feature>
<feature type="mutagenesis site" description="No effect on enzyme activity." evidence="14">
    <original>R</original>
    <variation>N</variation>
    <location>
        <position position="557"/>
    </location>
</feature>
<feature type="mutagenesis site" description="Strongly reduced enzyme activity." evidence="8">
    <original>C</original>
    <variation>A</variation>
    <location>
        <position position="561"/>
    </location>
</feature>
<feature type="mutagenesis site" description="Loss of enzyme activity." evidence="14">
    <location>
        <begin position="562"/>
        <end position="572"/>
    </location>
</feature>
<feature type="mutagenesis site" description="No effect." evidence="8">
    <original>C</original>
    <variation>A</variation>
    <location>
        <position position="563"/>
    </location>
</feature>
<feature type="mutagenesis site" description="Strongly reduced enzyme activity." evidence="8">
    <original>C</original>
    <variation>A</variation>
    <location>
        <position position="572"/>
    </location>
</feature>
<feature type="mutagenesis site" description="Strongly reduced enzyme activity." evidence="8">
    <original>C</original>
    <variation>A</variation>
    <location>
        <position position="574"/>
    </location>
</feature>
<feature type="mutagenesis site" description="Strongly decreased enzyme activity; when associated with A-599." evidence="14">
    <original>R</original>
    <variation>A</variation>
    <location>
        <position position="598"/>
    </location>
</feature>
<feature type="mutagenesis site" description="Decreased enzyme activity. Strongly decreased enzyme activity; when associated with A-598." evidence="14">
    <original>K</original>
    <variation>A</variation>
    <location>
        <position position="599"/>
    </location>
</feature>
<feature type="mutagenesis site" description="No effect." evidence="8">
    <original>C</original>
    <variation>A</variation>
    <location>
        <position position="675"/>
    </location>
</feature>
<feature type="mutagenesis site" description="No effect." evidence="7">
    <original>D</original>
    <variation>E</variation>
    <location>
        <position position="745"/>
    </location>
</feature>
<feature type="mutagenesis site" description="Abolishes enzyme activity but does not affect UDP-binding." evidence="7">
    <original>D</original>
    <variation>G</variation>
    <location>
        <position position="745"/>
    </location>
</feature>
<feature type="mutagenesis site" description="Strongly reduced enzyme activity but does not affect UDP-binding." evidence="7">
    <original>W</original>
    <variation>D</variation>
    <variation>N</variation>
    <variation>G</variation>
    <location>
        <position position="746"/>
    </location>
</feature>
<feature type="mutagenesis site" description="Reduced enzyme activity but does not affect UDP-binding." evidence="7">
    <original>D</original>
    <variation>G</variation>
    <variation>E</variation>
    <location>
        <position position="747"/>
    </location>
</feature>
<feature type="mutagenesis site" description="No effect on enzyme activity." evidence="14">
    <original>K</original>
    <variation>A</variation>
    <location>
        <position position="749"/>
    </location>
</feature>
<feature type="mutagenesis site" description="No effect on enzyme activity." evidence="14">
    <original>E</original>
    <variation>K</variation>
    <location>
        <position position="750"/>
    </location>
</feature>
<feature type="mutagenesis site" description="No effect on enzyme activity." evidence="14">
    <original>R</original>
    <variation>E</variation>
    <location>
        <position position="754"/>
    </location>
</feature>
<feature type="mutagenesis site" description="No effect." evidence="8">
    <original>C</original>
    <variation>A</variation>
    <location>
        <position position="920"/>
    </location>
</feature>
<feature type="mutagenesis site" description="No effect." evidence="8">
    <original>C</original>
    <variation>A</variation>
    <location>
        <position position="927"/>
    </location>
</feature>
<feature type="mutagenesis site" description="No effect." evidence="8">
    <original>C</original>
    <variation>A</variation>
    <location>
        <position position="933"/>
    </location>
</feature>
<feature type="helix" evidence="20">
    <location>
        <begin position="262"/>
        <end position="270"/>
    </location>
</feature>
<feature type="helix" evidence="20">
    <location>
        <begin position="274"/>
        <end position="288"/>
    </location>
</feature>
<feature type="strand" evidence="20">
    <location>
        <begin position="303"/>
        <end position="305"/>
    </location>
</feature>
<feature type="helix" evidence="20">
    <location>
        <begin position="315"/>
        <end position="318"/>
    </location>
</feature>
<feature type="strand" evidence="20">
    <location>
        <begin position="328"/>
        <end position="334"/>
    </location>
</feature>
<feature type="helix" evidence="20">
    <location>
        <begin position="339"/>
        <end position="349"/>
    </location>
</feature>
<feature type="strand" evidence="20">
    <location>
        <begin position="354"/>
        <end position="360"/>
    </location>
</feature>
<feature type="helix" evidence="20">
    <location>
        <begin position="365"/>
        <end position="377"/>
    </location>
</feature>
<feature type="strand" evidence="20">
    <location>
        <begin position="381"/>
        <end position="383"/>
    </location>
</feature>
<feature type="helix" evidence="20">
    <location>
        <begin position="396"/>
        <end position="410"/>
    </location>
</feature>
<feature type="strand" evidence="20">
    <location>
        <begin position="417"/>
        <end position="422"/>
    </location>
</feature>
<feature type="strand" evidence="20">
    <location>
        <begin position="426"/>
        <end position="430"/>
    </location>
</feature>
<feature type="helix" evidence="20">
    <location>
        <begin position="432"/>
        <end position="441"/>
    </location>
</feature>
<feature type="turn" evidence="20">
    <location>
        <begin position="442"/>
        <end position="444"/>
    </location>
</feature>
<feature type="strand" evidence="20">
    <location>
        <begin position="446"/>
        <end position="448"/>
    </location>
</feature>
<feature type="helix" evidence="20">
    <location>
        <begin position="455"/>
        <end position="462"/>
    </location>
</feature>
<feature type="turn" evidence="20">
    <location>
        <begin position="463"/>
        <end position="465"/>
    </location>
</feature>
<feature type="strand" evidence="20">
    <location>
        <begin position="466"/>
        <end position="471"/>
    </location>
</feature>
<feature type="strand" evidence="20">
    <location>
        <begin position="474"/>
        <end position="480"/>
    </location>
</feature>
<feature type="strand" evidence="20">
    <location>
        <begin position="497"/>
        <end position="499"/>
    </location>
</feature>
<feature type="helix" evidence="20">
    <location>
        <begin position="500"/>
        <end position="508"/>
    </location>
</feature>
<feature type="helix" evidence="20">
    <location>
        <begin position="512"/>
        <end position="520"/>
    </location>
</feature>
<feature type="helix" evidence="20">
    <location>
        <begin position="521"/>
        <end position="523"/>
    </location>
</feature>
<feature type="helix" evidence="20">
    <location>
        <begin position="527"/>
        <end position="529"/>
    </location>
</feature>
<feature type="helix" evidence="20">
    <location>
        <begin position="531"/>
        <end position="538"/>
    </location>
</feature>
<feature type="helix" evidence="20">
    <location>
        <begin position="542"/>
        <end position="544"/>
    </location>
</feature>
<feature type="strand" evidence="20">
    <location>
        <begin position="545"/>
        <end position="547"/>
    </location>
</feature>
<feature type="strand" evidence="20">
    <location>
        <begin position="550"/>
        <end position="553"/>
    </location>
</feature>
<feature type="helix" evidence="20">
    <location>
        <begin position="557"/>
        <end position="560"/>
    </location>
</feature>
<feature type="turn" evidence="20">
    <location>
        <begin position="564"/>
        <end position="568"/>
    </location>
</feature>
<feature type="strand" evidence="20">
    <location>
        <begin position="569"/>
        <end position="571"/>
    </location>
</feature>
<feature type="helix" evidence="20">
    <location>
        <begin position="581"/>
        <end position="588"/>
    </location>
</feature>
<feature type="strand" evidence="20">
    <location>
        <begin position="596"/>
        <end position="598"/>
    </location>
</feature>
<feature type="turn" evidence="20">
    <location>
        <begin position="602"/>
        <end position="604"/>
    </location>
</feature>
<feature type="helix" evidence="20">
    <location>
        <begin position="607"/>
        <end position="617"/>
    </location>
</feature>
<feature type="turn" evidence="20">
    <location>
        <begin position="625"/>
        <end position="628"/>
    </location>
</feature>
<feature type="strand" evidence="20">
    <location>
        <begin position="629"/>
        <end position="636"/>
    </location>
</feature>
<feature type="helix" evidence="20">
    <location>
        <begin position="637"/>
        <end position="639"/>
    </location>
</feature>
<feature type="helix" evidence="20">
    <location>
        <begin position="641"/>
        <end position="643"/>
    </location>
</feature>
<feature type="helix" evidence="20">
    <location>
        <begin position="646"/>
        <end position="665"/>
    </location>
</feature>
<feature type="strand" evidence="20">
    <location>
        <begin position="677"/>
        <end position="691"/>
    </location>
</feature>
<feature type="strand" evidence="20">
    <location>
        <begin position="694"/>
        <end position="706"/>
    </location>
</feature>
<feature type="turn" evidence="20">
    <location>
        <begin position="707"/>
        <end position="710"/>
    </location>
</feature>
<feature type="strand" evidence="20">
    <location>
        <begin position="711"/>
        <end position="721"/>
    </location>
</feature>
<feature type="strand" evidence="20">
    <location>
        <begin position="737"/>
        <end position="747"/>
    </location>
</feature>
<feature type="turn" evidence="20">
    <location>
        <begin position="748"/>
        <end position="751"/>
    </location>
</feature>
<feature type="strand" evidence="20">
    <location>
        <begin position="752"/>
        <end position="755"/>
    </location>
</feature>
<feature type="strand" evidence="20">
    <location>
        <begin position="767"/>
        <end position="772"/>
    </location>
</feature>
<feature type="strand" evidence="20">
    <location>
        <begin position="774"/>
        <end position="776"/>
    </location>
</feature>
<feature type="strand" evidence="20">
    <location>
        <begin position="778"/>
        <end position="785"/>
    </location>
</feature>
<feature type="strand" evidence="20">
    <location>
        <begin position="791"/>
        <end position="799"/>
    </location>
</feature>
<feature type="strand" evidence="20">
    <location>
        <begin position="805"/>
        <end position="808"/>
    </location>
</feature>
<feature type="strand" evidence="20">
    <location>
        <begin position="818"/>
        <end position="827"/>
    </location>
</feature>
<feature type="strand" evidence="20">
    <location>
        <begin position="830"/>
        <end position="839"/>
    </location>
</feature>
<feature type="strand" evidence="20">
    <location>
        <begin position="843"/>
        <end position="845"/>
    </location>
</feature>
<feature type="helix" evidence="20">
    <location>
        <begin position="852"/>
        <end position="859"/>
    </location>
</feature>
<feature type="strand" evidence="20">
    <location>
        <begin position="865"/>
        <end position="870"/>
    </location>
</feature>
<feature type="helix" evidence="20">
    <location>
        <begin position="873"/>
        <end position="875"/>
    </location>
</feature>
<feature type="turn" evidence="20">
    <location>
        <begin position="876"/>
        <end position="880"/>
    </location>
</feature>
<feature type="helix" evidence="20">
    <location>
        <begin position="885"/>
        <end position="895"/>
    </location>
</feature>
<feature type="helix" evidence="20">
    <location>
        <begin position="899"/>
        <end position="913"/>
    </location>
</feature>
<feature type="strand" evidence="20">
    <location>
        <begin position="914"/>
        <end position="923"/>
    </location>
</feature>
<feature type="helix" evidence="20">
    <location>
        <begin position="933"/>
        <end position="935"/>
    </location>
</feature>
<feature type="strand" evidence="20">
    <location>
        <begin position="936"/>
        <end position="939"/>
    </location>
</feature>
<feature type="helix" evidence="20">
    <location>
        <begin position="945"/>
        <end position="947"/>
    </location>
</feature>
<reference key="1">
    <citation type="journal article" date="2005" name="Biochem. J.">
        <title>Human xylosyltransferase I: functional and biochemical characterization of cysteine residues required for enzymic activity.</title>
        <authorList>
            <person name="Mueller S."/>
            <person name="Schoettler M."/>
            <person name="Schoen S."/>
            <person name="Prante C."/>
            <person name="Brinkmann T."/>
            <person name="Kuhn J."/>
            <person name="Goetting C."/>
            <person name="Kleesiek K."/>
        </authorList>
    </citation>
    <scope>NUCLEOTIDE SEQUENCE [MRNA]</scope>
    <scope>FUNCTION</scope>
    <scope>DISULFIDE BONDS</scope>
    <scope>COFACTOR</scope>
    <scope>CATALYTIC ACTIVITY</scope>
    <scope>BIOPHYSICOCHEMICAL PROPERTIES</scope>
    <scope>SUBUNIT</scope>
    <scope>MUTAGENESIS OF CYS-257; CYS-276; CYS-285; CYS-301; CYS-471; CYS-542; CYS-561; CYS-563; CYS-572; CYS-574; CYS-675; CYS-920; CYS-927 AND CYS-933</scope>
</reference>
<reference key="2">
    <citation type="journal article" date="2000" name="J. Mol. Biol.">
        <title>Molecular cloning and expression of human UDP-D-xylose:proteoglycan core protein beta-D-xylosyltransferase and its first isoform XT-II.</title>
        <authorList>
            <person name="Goetting C."/>
            <person name="Kuhn J."/>
            <person name="Zahn R."/>
            <person name="Brinkmann T."/>
            <person name="Kleesiek K."/>
        </authorList>
    </citation>
    <scope>NUCLEOTIDE SEQUENCE [MRNA] OF 133-959</scope>
    <scope>CATALYTIC ACTIVITY</scope>
    <scope>TISSUE SPECIFICITY</scope>
</reference>
<reference key="3">
    <citation type="journal article" date="2001" name="J. Biol. Chem.">
        <title>First isolation of human UDP-D-xylose: proteoglycan core protein beta-D-xylosyltransferase secreted from cultured JAR choriocarcinoma cells.</title>
        <authorList>
            <person name="Kuhn J."/>
            <person name="Goetting C."/>
            <person name="Schnoelzer M."/>
            <person name="Kempf T."/>
            <person name="Brinkmann T."/>
            <person name="Kleesiek K."/>
        </authorList>
    </citation>
    <scope>PROTEIN SEQUENCE OF 159-171; 185-202; 289-296; 444-449; 593-598; 727-748 AND 948-959</scope>
    <scope>CATALYTIC ACTIVITY</scope>
    <scope>SUBCELLULAR LOCATION</scope>
    <scope>GLYCOSYLATION</scope>
</reference>
<reference key="4">
    <citation type="journal article" date="2002" name="Clin. Chim. Acta">
        <title>Xylosyltransferase activity in seminal plasma of infertile men.</title>
        <authorList>
            <person name="Goetting C."/>
            <person name="Kuhn J."/>
            <person name="Brinkmann T."/>
            <person name="Kleesiek K."/>
        </authorList>
    </citation>
    <scope>REDUCED ACTIVITY IN SEMINAL PLASMA</scope>
</reference>
<reference key="5">
    <citation type="journal article" date="2004" name="J. Biol. Chem.">
        <title>Analysis of the DXD motifs in human xylosyltransferase I required for enzyme activity.</title>
        <authorList>
            <person name="Goetting C."/>
            <person name="Mueller S."/>
            <person name="Schoettler M."/>
            <person name="Schoen S."/>
            <person name="Prante C."/>
            <person name="Brinkmann T."/>
            <person name="Kuhn J."/>
            <person name="Kleesiek K."/>
        </authorList>
    </citation>
    <scope>CATALYTIC ACTIVITY</scope>
    <scope>BIOPHYSICOCHEMICAL PROPERTIES</scope>
    <scope>COFACTOR</scope>
    <scope>MUTAGENESIS OF ASP-314; ASP-316; ASP-745; TRP-746 AND ASP-747</scope>
</reference>
<reference key="6">
    <citation type="journal article" date="2007" name="J. Biol. Chem.">
        <title>Human xylosyltransferase II is involved in the biosynthesis of the uniform tetrasaccharide linkage region in chondroitin sulfate and heparan sulfate proteoglycans.</title>
        <authorList>
            <person name="Poenighaus C."/>
            <person name="Ambrosius M."/>
            <person name="Casanova J.C."/>
            <person name="Prante C."/>
            <person name="Kuhn J."/>
            <person name="Esko J.D."/>
            <person name="Kleesiek K."/>
            <person name="Goetting C."/>
        </authorList>
    </citation>
    <scope>FUNCTION</scope>
    <scope>CATALYTIC ACTIVITY</scope>
    <scope>PATHWAY</scope>
</reference>
<reference key="7">
    <citation type="journal article" date="2018" name="Structure">
        <title>Structural Basis for the Initiation of Glycosaminoglycan Biosynthesis by Human Xylosyltransferase 1.</title>
        <authorList>
            <person name="Briggs D.C."/>
            <person name="Hohenester E."/>
        </authorList>
    </citation>
    <scope>X-RAY CRYSTALLOGRAPHY (1.87 ANGSTROMS) OF 232-959 IN COMPLEXES WITH UDP-XYLOSE AND SUBSTRATE PEPTIDES</scope>
    <scope>CATALYTIC ACTIVITY</scope>
    <scope>GLYCOSYLATION AT ASN-777</scope>
    <scope>DISULFIDE BOND</scope>
    <scope>MUTAGENESIS OF GLN-462; ASP-494; GLU-529; ARG-557; ARG-598; LYS-599; 562-LYS--CYS-572; LYS-749; GLU-750 AND ARG-754</scope>
</reference>
<reference key="8">
    <citation type="journal article" date="2006" name="J. Med. Genet.">
        <title>Polymorphisms in the xylosyltransferase genes cause higher serum XT-I activity in patients with pseudoxanthoma elasticum (PXE) and are involved in a severe disease course.</title>
        <authorList>
            <person name="Schon S."/>
            <person name="Schulz V."/>
            <person name="Prante C."/>
            <person name="Hendig D."/>
            <person name="Szliska C."/>
            <person name="Kuhn J."/>
            <person name="Kleesiek K."/>
            <person name="Gotting C."/>
        </authorList>
    </citation>
    <scope>INVOLVEMENT IN PXE</scope>
    <scope>SUBCELLULAR LOCATION</scope>
    <scope>VARIANT PXE SER-115</scope>
    <scope>VARIANTS TRP-406 AND MET-665</scope>
</reference>
<reference key="9">
    <citation type="journal article" date="2014" name="Am. J. Hum. Genet.">
        <title>XYLT1 mutations in Desbuquois dysplasia type 2.</title>
        <authorList>
            <person name="Bui C."/>
            <person name="Huber C."/>
            <person name="Tuysuz B."/>
            <person name="Alanay Y."/>
            <person name="Bole-Feysot C."/>
            <person name="Leroy J.G."/>
            <person name="Mortier G."/>
            <person name="Nitschke P."/>
            <person name="Munnich A."/>
            <person name="Cormier-Daire V."/>
        </authorList>
    </citation>
    <scope>VARIANT DBQD2 CYS-598</scope>
    <scope>FUNCTION</scope>
</reference>
<reference key="10">
    <citation type="journal article" date="2014" name="Hum. Genet.">
        <title>The missing 'link': an autosomal recessive short stature syndrome caused by a hypofunctional XYLT1 mutation.</title>
        <authorList>
            <person name="Schreml J."/>
            <person name="Durmaz B."/>
            <person name="Cogulu O."/>
            <person name="Keupp K."/>
            <person name="Beleggia F."/>
            <person name="Pohl E."/>
            <person name="Milz E."/>
            <person name="Coker M."/>
            <person name="Ucar S.K."/>
            <person name="Nurnberg G."/>
            <person name="Nurnberg P."/>
            <person name="Kuhn J."/>
            <person name="Ozkinay F."/>
        </authorList>
    </citation>
    <scope>VARIANT DBQD2 TRP-481</scope>
    <scope>FUNCTION</scope>
    <scope>CATALYTIC ACTIVITY</scope>
    <scope>SUBCELLULAR LOCATION</scope>
    <scope>PATHWAY</scope>
</reference>
<reference key="11">
    <citation type="journal article" date="2017" name="Am. J. Med. Genet. A">
        <title>Endoplasmic reticulum retention of xylosyltransferase 1 (XYLT1) mutants underlying Desbuquois dysplasia type II.</title>
        <authorList>
            <person name="Al-Jezawi N.K."/>
            <person name="Ali B.R."/>
            <person name="Al-Gazali L."/>
        </authorList>
    </citation>
    <scope>INVOLVEMENT IN DBQD2</scope>
    <scope>CHARACTERIZATION OF VARIANTS DBQD2 TRP-481 AND CYS-598</scope>
    <scope>SUBCELLULAR LOCATION</scope>
</reference>
<name>XYLT1_HUMAN</name>
<sequence length="959" mass="107569">MVAAPCARRLARRSHSALLAALTVLLLQTLVVWNFSSLDSGAGERRGGAAVGGGEQPPPAPAPRRERRDLPAEPAAARGGGGGGGGGGGGRGPQARARGGGPGEPRGQQPASRGALPARALDPHPSPLITLETQDGYFSHRPKEKVRTDSNNENSVPKDFENVDNSNFAPRTQKQKHQPELAKKPPSRQKELLKRKLEQQEKGKGHTFPGKGPGEVLPPGDRAAANSSHGKDVSRPPHARKTGGSSPETKYDQPPKCDISGKEAISALSRAKSKHCRQEIGETYCRHKLGLLMPEKVTRFCPLEGKANKNVQWDEDSVEYMPANPVRIAFVLVVHGRASRQLQRMFKAIYHKDHFYYIHVDKRSNYLHRQVLQVSRQYSNVRVTPWRMATIWGGASLLSTYLQSMRDLLEMTDWPWDFFINLSAADYPIRTNDQLVAFLSRYRDMNFLKSHGRDNARFIRKQGLDRLFLECDAHMWRLGDRRIPEGIAVDGGSDWFLLNRRFVEYVTFSTDDLVTKMKQFYSYTLLPAESFFHTVLENSPHCDTMVDNNLRITNWNRKLGCKCQYKHIVDWCGCSPNDFKPQDFHRFQQTARPTFFARKFEAVVNQEIIGQLDYYLYGNYPAGTPGLRSYWENVYDEPDGIHSLSDVTLTLYHSFARLGLRRAETSLHTDGENSCRYYPMGHPASVHLYFLADRFQGFLIKHHATNLAVSKLETLETWVMPKKVFKIASPPSDFGRLQFSEVGTDWDAKERLFRNFGGLLGPMDEPVGMQKWGKGPNVTVTVIWVDPVNVIAATYDILIESTAEFTHYKPPLNLPLRPGVWTVKILHHWVPVAETKFLVAPLTFSNRQPIKPEEALKLHNGPLRNAYMEQSFQSLNPVLSLPINPAQVEQARRNAASTGTALEGWLDSLVGGMWTAMDICATGPTACPVMQTCSQTAWSSFSPDPKSELGAVKPDGRLR</sequence>
<proteinExistence type="evidence at protein level"/>
<dbReference type="EC" id="2.4.2.26" evidence="4 5 7 8 10 11 14"/>
<dbReference type="EMBL" id="AJ539163">
    <property type="protein sequence ID" value="CAD62248.1"/>
    <property type="molecule type" value="mRNA"/>
</dbReference>
<dbReference type="EMBL" id="AJ277441">
    <property type="protein sequence ID" value="CAC16787.1"/>
    <property type="molecule type" value="mRNA"/>
</dbReference>
<dbReference type="CCDS" id="CCDS10569.1"/>
<dbReference type="RefSeq" id="NP_071449.1">
    <property type="nucleotide sequence ID" value="NM_022166.4"/>
</dbReference>
<dbReference type="PDB" id="6EJ7">
    <property type="method" value="X-ray"/>
    <property type="resolution" value="2.00 A"/>
    <property type="chains" value="A=232-959"/>
</dbReference>
<dbReference type="PDB" id="6EJ8">
    <property type="method" value="X-ray"/>
    <property type="resolution" value="2.09 A"/>
    <property type="chains" value="A=232-959"/>
</dbReference>
<dbReference type="PDB" id="6EJ9">
    <property type="method" value="X-ray"/>
    <property type="resolution" value="2.02 A"/>
    <property type="chains" value="A=232-959"/>
</dbReference>
<dbReference type="PDB" id="6EJA">
    <property type="method" value="X-ray"/>
    <property type="resolution" value="1.94 A"/>
    <property type="chains" value="A=232-959"/>
</dbReference>
<dbReference type="PDB" id="6EJB">
    <property type="method" value="X-ray"/>
    <property type="resolution" value="2.56 A"/>
    <property type="chains" value="A=232-959"/>
</dbReference>
<dbReference type="PDB" id="6EJC">
    <property type="method" value="X-ray"/>
    <property type="resolution" value="2.06 A"/>
    <property type="chains" value="A=232-959"/>
</dbReference>
<dbReference type="PDB" id="6EJD">
    <property type="method" value="X-ray"/>
    <property type="resolution" value="2.68 A"/>
    <property type="chains" value="A=232-959"/>
</dbReference>
<dbReference type="PDB" id="6EJE">
    <property type="method" value="X-ray"/>
    <property type="resolution" value="2.43 A"/>
    <property type="chains" value="A=232-959"/>
</dbReference>
<dbReference type="PDB" id="6FOA">
    <property type="method" value="X-ray"/>
    <property type="resolution" value="1.87 A"/>
    <property type="chains" value="A=232-959"/>
</dbReference>
<dbReference type="PDBsum" id="6EJ7"/>
<dbReference type="PDBsum" id="6EJ8"/>
<dbReference type="PDBsum" id="6EJ9"/>
<dbReference type="PDBsum" id="6EJA"/>
<dbReference type="PDBsum" id="6EJB"/>
<dbReference type="PDBsum" id="6EJC"/>
<dbReference type="PDBsum" id="6EJD"/>
<dbReference type="PDBsum" id="6EJE"/>
<dbReference type="PDBsum" id="6FOA"/>
<dbReference type="SMR" id="Q86Y38"/>
<dbReference type="BioGRID" id="122080">
    <property type="interactions" value="15"/>
</dbReference>
<dbReference type="FunCoup" id="Q86Y38">
    <property type="interactions" value="386"/>
</dbReference>
<dbReference type="IntAct" id="Q86Y38">
    <property type="interactions" value="12"/>
</dbReference>
<dbReference type="MINT" id="Q86Y38"/>
<dbReference type="STRING" id="9606.ENSP00000261381"/>
<dbReference type="CAZy" id="GT14">
    <property type="family name" value="Glycosyltransferase Family 14"/>
</dbReference>
<dbReference type="GlyCosmos" id="Q86Y38">
    <property type="glycosylation" value="4 sites, 1 glycan"/>
</dbReference>
<dbReference type="GlyGen" id="Q86Y38">
    <property type="glycosylation" value="12 sites, 2 O-linked glycans (6 sites)"/>
</dbReference>
<dbReference type="iPTMnet" id="Q86Y38"/>
<dbReference type="PhosphoSitePlus" id="Q86Y38"/>
<dbReference type="BioMuta" id="XYLT1"/>
<dbReference type="DMDM" id="71164803"/>
<dbReference type="jPOST" id="Q86Y38"/>
<dbReference type="MassIVE" id="Q86Y38"/>
<dbReference type="PaxDb" id="9606-ENSP00000261381"/>
<dbReference type="PeptideAtlas" id="Q86Y38"/>
<dbReference type="ProteomicsDB" id="70370"/>
<dbReference type="Antibodypedia" id="2316">
    <property type="antibodies" value="109 antibodies from 24 providers"/>
</dbReference>
<dbReference type="DNASU" id="64131"/>
<dbReference type="Ensembl" id="ENST00000261381.7">
    <property type="protein sequence ID" value="ENSP00000261381.6"/>
    <property type="gene ID" value="ENSG00000103489.12"/>
</dbReference>
<dbReference type="Ensembl" id="ENST00000671765.2">
    <property type="protein sequence ID" value="ENSP00000500327.2"/>
    <property type="gene ID" value="ENSG00000285395.3"/>
</dbReference>
<dbReference type="GeneID" id="64131"/>
<dbReference type="KEGG" id="hsa:64131"/>
<dbReference type="MANE-Select" id="ENST00000261381.7">
    <property type="protein sequence ID" value="ENSP00000261381.6"/>
    <property type="RefSeq nucleotide sequence ID" value="NM_022166.4"/>
    <property type="RefSeq protein sequence ID" value="NP_071449.1"/>
</dbReference>
<dbReference type="UCSC" id="uc002dfa.4">
    <property type="organism name" value="human"/>
</dbReference>
<dbReference type="AGR" id="HGNC:15516"/>
<dbReference type="CTD" id="64131"/>
<dbReference type="DisGeNET" id="64131"/>
<dbReference type="GeneCards" id="XYLT1"/>
<dbReference type="HGNC" id="HGNC:15516">
    <property type="gene designation" value="XYLT1"/>
</dbReference>
<dbReference type="HPA" id="ENSG00000103489">
    <property type="expression patterns" value="Low tissue specificity"/>
</dbReference>
<dbReference type="MalaCards" id="XYLT1"/>
<dbReference type="MIM" id="264800">
    <property type="type" value="phenotype"/>
</dbReference>
<dbReference type="MIM" id="608124">
    <property type="type" value="gene"/>
</dbReference>
<dbReference type="MIM" id="615777">
    <property type="type" value="phenotype"/>
</dbReference>
<dbReference type="neXtProt" id="NX_Q86Y38"/>
<dbReference type="OpenTargets" id="ENSG00000103489"/>
<dbReference type="Orphanet" id="1425">
    <property type="disease" value="Desbuquois syndrome"/>
</dbReference>
<dbReference type="Orphanet" id="370930">
    <property type="disease" value="XYLT1-CDG"/>
</dbReference>
<dbReference type="PharmGKB" id="PA37973"/>
<dbReference type="VEuPathDB" id="HostDB:ENSG00000103489"/>
<dbReference type="eggNOG" id="KOG0799">
    <property type="taxonomic scope" value="Eukaryota"/>
</dbReference>
<dbReference type="GeneTree" id="ENSGT00940000157381"/>
<dbReference type="HOGENOM" id="CLU_012840_0_0_1"/>
<dbReference type="InParanoid" id="Q86Y38"/>
<dbReference type="OMA" id="RECFCGF"/>
<dbReference type="OrthoDB" id="2019572at2759"/>
<dbReference type="PAN-GO" id="Q86Y38">
    <property type="GO annotations" value="3 GO annotations based on evolutionary models"/>
</dbReference>
<dbReference type="PhylomeDB" id="Q86Y38"/>
<dbReference type="TreeFam" id="TF315534"/>
<dbReference type="BioCyc" id="MetaCyc:HS02509-MONOMER"/>
<dbReference type="BRENDA" id="2.4.2.26">
    <property type="organism ID" value="2681"/>
</dbReference>
<dbReference type="PathwayCommons" id="Q86Y38"/>
<dbReference type="Reactome" id="R-HSA-1971475">
    <property type="pathway name" value="A tetrasaccharide linker sequence is required for GAG synthesis"/>
</dbReference>
<dbReference type="SignaLink" id="Q86Y38"/>
<dbReference type="UniPathway" id="UPA00755"/>
<dbReference type="UniPathway" id="UPA00756"/>
<dbReference type="BioGRID-ORCS" id="64131">
    <property type="hits" value="13 hits in 1146 CRISPR screens"/>
</dbReference>
<dbReference type="ChiTaRS" id="XYLT1">
    <property type="organism name" value="human"/>
</dbReference>
<dbReference type="GeneWiki" id="XYLT1"/>
<dbReference type="GenomeRNAi" id="64131"/>
<dbReference type="Pharos" id="Q86Y38">
    <property type="development level" value="Tbio"/>
</dbReference>
<dbReference type="PRO" id="PR:Q86Y38"/>
<dbReference type="Proteomes" id="UP000005640">
    <property type="component" value="Chromosome 16"/>
</dbReference>
<dbReference type="RNAct" id="Q86Y38">
    <property type="molecule type" value="protein"/>
</dbReference>
<dbReference type="Bgee" id="ENSG00000103489">
    <property type="expression patterns" value="Expressed in tibia and 196 other cell types or tissues"/>
</dbReference>
<dbReference type="GO" id="GO:0005615">
    <property type="term" value="C:extracellular space"/>
    <property type="evidence" value="ECO:0000314"/>
    <property type="project" value="UniProtKB"/>
</dbReference>
<dbReference type="GO" id="GO:0000137">
    <property type="term" value="C:Golgi cis cisterna"/>
    <property type="evidence" value="ECO:0000250"/>
    <property type="project" value="UniProtKB"/>
</dbReference>
<dbReference type="GO" id="GO:0000139">
    <property type="term" value="C:Golgi membrane"/>
    <property type="evidence" value="ECO:0000314"/>
    <property type="project" value="UniProtKB"/>
</dbReference>
<dbReference type="GO" id="GO:0046872">
    <property type="term" value="F:metal ion binding"/>
    <property type="evidence" value="ECO:0007669"/>
    <property type="project" value="UniProtKB-KW"/>
</dbReference>
<dbReference type="GO" id="GO:0030158">
    <property type="term" value="F:protein xylosyltransferase activity"/>
    <property type="evidence" value="ECO:0000314"/>
    <property type="project" value="UniProtKB"/>
</dbReference>
<dbReference type="GO" id="GO:0050650">
    <property type="term" value="P:chondroitin sulfate proteoglycan biosynthetic process"/>
    <property type="evidence" value="ECO:0000315"/>
    <property type="project" value="UniProtKB"/>
</dbReference>
<dbReference type="GO" id="GO:0048706">
    <property type="term" value="P:embryonic skeletal system development"/>
    <property type="evidence" value="ECO:0000250"/>
    <property type="project" value="UniProtKB"/>
</dbReference>
<dbReference type="GO" id="GO:0006024">
    <property type="term" value="P:glycosaminoglycan biosynthetic process"/>
    <property type="evidence" value="ECO:0000304"/>
    <property type="project" value="UniProtKB"/>
</dbReference>
<dbReference type="GO" id="GO:0030203">
    <property type="term" value="P:glycosaminoglycan metabolic process"/>
    <property type="evidence" value="ECO:0000304"/>
    <property type="project" value="Reactome"/>
</dbReference>
<dbReference type="GO" id="GO:0015012">
    <property type="term" value="P:heparan sulfate proteoglycan biosynthetic process"/>
    <property type="evidence" value="ECO:0000315"/>
    <property type="project" value="UniProtKB"/>
</dbReference>
<dbReference type="GO" id="GO:0043931">
    <property type="term" value="P:ossification involved in bone maturation"/>
    <property type="evidence" value="ECO:0000250"/>
    <property type="project" value="UniProtKB"/>
</dbReference>
<dbReference type="GO" id="GO:0030166">
    <property type="term" value="P:proteoglycan biosynthetic process"/>
    <property type="evidence" value="ECO:0000314"/>
    <property type="project" value="UniProtKB"/>
</dbReference>
<dbReference type="InterPro" id="IPR003406">
    <property type="entry name" value="Glyco_trans_14"/>
</dbReference>
<dbReference type="InterPro" id="IPR043538">
    <property type="entry name" value="XYLT"/>
</dbReference>
<dbReference type="InterPro" id="IPR024448">
    <property type="entry name" value="XylT_C"/>
</dbReference>
<dbReference type="PANTHER" id="PTHR46025:SF2">
    <property type="entry name" value="XYLOSYLTRANSFERASE 1"/>
    <property type="match status" value="1"/>
</dbReference>
<dbReference type="PANTHER" id="PTHR46025">
    <property type="entry name" value="XYLOSYLTRANSFERASE OXT"/>
    <property type="match status" value="1"/>
</dbReference>
<dbReference type="Pfam" id="PF02485">
    <property type="entry name" value="Branch"/>
    <property type="match status" value="1"/>
</dbReference>
<dbReference type="Pfam" id="PF12529">
    <property type="entry name" value="Xylo_C"/>
    <property type="match status" value="1"/>
</dbReference>
<protein>
    <recommendedName>
        <fullName>Xylosyltransferase 1</fullName>
        <ecNumber evidence="4 5 7 8 10 11 14">2.4.2.26</ecNumber>
    </recommendedName>
    <alternativeName>
        <fullName>Peptide O-xylosyltransferase 1</fullName>
    </alternativeName>
    <alternativeName>
        <fullName>Xylosyltransferase I</fullName>
        <shortName>XT-I</shortName>
        <shortName>XylT-I</shortName>
    </alternativeName>
</protein>
<keyword id="KW-0002">3D-structure</keyword>
<keyword id="KW-0903">Direct protein sequencing</keyword>
<keyword id="KW-0225">Disease variant</keyword>
<keyword id="KW-1015">Disulfide bond</keyword>
<keyword id="KW-0242">Dwarfism</keyword>
<keyword id="KW-0325">Glycoprotein</keyword>
<keyword id="KW-0328">Glycosyltransferase</keyword>
<keyword id="KW-0333">Golgi apparatus</keyword>
<keyword id="KW-0472">Membrane</keyword>
<keyword id="KW-0479">Metal-binding</keyword>
<keyword id="KW-1267">Proteomics identification</keyword>
<keyword id="KW-1185">Reference proteome</keyword>
<keyword id="KW-0964">Secreted</keyword>
<keyword id="KW-0735">Signal-anchor</keyword>
<keyword id="KW-0808">Transferase</keyword>
<keyword id="KW-0812">Transmembrane</keyword>
<keyword id="KW-1133">Transmembrane helix</keyword>